<feature type="initiator methionine" description="Removed" evidence="1">
    <location>
        <position position="1"/>
    </location>
</feature>
<feature type="chain" id="PRO_0000159198" description="Ferredoxin">
    <location>
        <begin position="2"/>
        <end position="67"/>
    </location>
</feature>
<feature type="domain" description="4Fe-4S ferredoxin-type 1" evidence="2">
    <location>
        <begin position="3"/>
        <end position="31"/>
    </location>
</feature>
<feature type="domain" description="4Fe-4S ferredoxin-type 2" evidence="2">
    <location>
        <begin position="36"/>
        <end position="67"/>
    </location>
</feature>
<feature type="binding site" evidence="1">
    <location>
        <position position="12"/>
    </location>
    <ligand>
        <name>[4Fe-4S] cluster</name>
        <dbReference type="ChEBI" id="CHEBI:49883"/>
    </ligand>
</feature>
<feature type="binding site" evidence="1">
    <location>
        <position position="15"/>
    </location>
    <ligand>
        <name>[4Fe-4S] cluster</name>
        <dbReference type="ChEBI" id="CHEBI:49883"/>
    </ligand>
</feature>
<feature type="binding site" evidence="1">
    <location>
        <position position="18"/>
    </location>
    <ligand>
        <name>[4Fe-4S] cluster</name>
        <dbReference type="ChEBI" id="CHEBI:49883"/>
    </ligand>
</feature>
<feature type="binding site" evidence="1">
    <location>
        <position position="57"/>
    </location>
    <ligand>
        <name>[4Fe-4S] cluster</name>
        <dbReference type="ChEBI" id="CHEBI:49883"/>
    </ligand>
</feature>
<feature type="disulfide bond" evidence="1">
    <location>
        <begin position="22"/>
        <end position="49"/>
    </location>
</feature>
<sequence length="67" mass="7328">MAWKVSVDQDTCIGDAICASLCPDVFEMNDEGKAQPKVEIIEDEELYNCAKEAMESCPVSAITIEEA</sequence>
<gene>
    <name type="primary">fdxA</name>
    <name type="ordered locus">PYRAB17260</name>
    <name type="ORF">PAB7439</name>
</gene>
<protein>
    <recommendedName>
        <fullName>Ferredoxin</fullName>
    </recommendedName>
</protein>
<comment type="function">
    <text evidence="1">Ferredoxins are iron-sulfur proteins that transfer electrons in a wide variety of metabolic reactions.</text>
</comment>
<comment type="cofactor">
    <cofactor evidence="1">
        <name>[4Fe-4S] cluster</name>
        <dbReference type="ChEBI" id="CHEBI:49883"/>
    </cofactor>
    <cofactor evidence="1">
        <name>[3Fe-4S] cluster</name>
        <dbReference type="ChEBI" id="CHEBI:21137"/>
    </cofactor>
    <text evidence="1">Binds 1 [4Fe-4S] cluster which readily converts to a stable [3Fe-4S] form.</text>
</comment>
<accession>Q9UXY2</accession>
<accession>G8ZK92</accession>
<name>FER_PYRAB</name>
<organism>
    <name type="scientific">Pyrococcus abyssi (strain GE5 / Orsay)</name>
    <dbReference type="NCBI Taxonomy" id="272844"/>
    <lineage>
        <taxon>Archaea</taxon>
        <taxon>Methanobacteriati</taxon>
        <taxon>Methanobacteriota</taxon>
        <taxon>Thermococci</taxon>
        <taxon>Thermococcales</taxon>
        <taxon>Thermococcaceae</taxon>
        <taxon>Pyrococcus</taxon>
    </lineage>
</organism>
<keyword id="KW-0003">3Fe-4S</keyword>
<keyword id="KW-0004">4Fe-4S</keyword>
<keyword id="KW-1015">Disulfide bond</keyword>
<keyword id="KW-0249">Electron transport</keyword>
<keyword id="KW-0408">Iron</keyword>
<keyword id="KW-0411">Iron-sulfur</keyword>
<keyword id="KW-0479">Metal-binding</keyword>
<keyword id="KW-0677">Repeat</keyword>
<keyword id="KW-0813">Transport</keyword>
<reference key="1">
    <citation type="journal article" date="2003" name="Mol. Microbiol.">
        <title>An integrated analysis of the genome of the hyperthermophilic archaeon Pyrococcus abyssi.</title>
        <authorList>
            <person name="Cohen G.N."/>
            <person name="Barbe V."/>
            <person name="Flament D."/>
            <person name="Galperin M."/>
            <person name="Heilig R."/>
            <person name="Lecompte O."/>
            <person name="Poch O."/>
            <person name="Prieur D."/>
            <person name="Querellou J."/>
            <person name="Ripp R."/>
            <person name="Thierry J.-C."/>
            <person name="Van der Oost J."/>
            <person name="Weissenbach J."/>
            <person name="Zivanovic Y."/>
            <person name="Forterre P."/>
        </authorList>
    </citation>
    <scope>NUCLEOTIDE SEQUENCE [LARGE SCALE GENOMIC DNA]</scope>
    <source>
        <strain>GE5 / Orsay</strain>
    </source>
</reference>
<reference key="2">
    <citation type="journal article" date="2012" name="Curr. Microbiol.">
        <title>Re-annotation of two hyperthermophilic archaea Pyrococcus abyssi GE5 and Pyrococcus furiosus DSM 3638.</title>
        <authorList>
            <person name="Gao J."/>
            <person name="Wang J."/>
        </authorList>
    </citation>
    <scope>GENOME REANNOTATION</scope>
    <source>
        <strain>GE5 / Orsay</strain>
    </source>
</reference>
<proteinExistence type="inferred from homology"/>
<dbReference type="EMBL" id="AJ248288">
    <property type="protein sequence ID" value="CAB50631.1"/>
    <property type="molecule type" value="Genomic_DNA"/>
</dbReference>
<dbReference type="EMBL" id="HE613800">
    <property type="protein sequence ID" value="CCE71199.1"/>
    <property type="molecule type" value="Genomic_DNA"/>
</dbReference>
<dbReference type="PIR" id="A75024">
    <property type="entry name" value="A75024"/>
</dbReference>
<dbReference type="RefSeq" id="WP_010868845.1">
    <property type="nucleotide sequence ID" value="NC_000868.1"/>
</dbReference>
<dbReference type="SMR" id="Q9UXY2"/>
<dbReference type="STRING" id="272844.PAB7439"/>
<dbReference type="KEGG" id="pab:PAB7439"/>
<dbReference type="PATRIC" id="fig|272844.11.peg.1844"/>
<dbReference type="eggNOG" id="arCOG00349">
    <property type="taxonomic scope" value="Archaea"/>
</dbReference>
<dbReference type="HOGENOM" id="CLU_139698_6_4_2"/>
<dbReference type="OrthoDB" id="5583at2157"/>
<dbReference type="PhylomeDB" id="Q9UXY2"/>
<dbReference type="Proteomes" id="UP000000810">
    <property type="component" value="Chromosome"/>
</dbReference>
<dbReference type="Proteomes" id="UP000009139">
    <property type="component" value="Chromosome"/>
</dbReference>
<dbReference type="GO" id="GO:0051538">
    <property type="term" value="F:3 iron, 4 sulfur cluster binding"/>
    <property type="evidence" value="ECO:0007669"/>
    <property type="project" value="UniProtKB-KW"/>
</dbReference>
<dbReference type="GO" id="GO:0051539">
    <property type="term" value="F:4 iron, 4 sulfur cluster binding"/>
    <property type="evidence" value="ECO:0007669"/>
    <property type="project" value="UniProtKB-KW"/>
</dbReference>
<dbReference type="GO" id="GO:0009055">
    <property type="term" value="F:electron transfer activity"/>
    <property type="evidence" value="ECO:0007669"/>
    <property type="project" value="InterPro"/>
</dbReference>
<dbReference type="GO" id="GO:0005506">
    <property type="term" value="F:iron ion binding"/>
    <property type="evidence" value="ECO:0007669"/>
    <property type="project" value="InterPro"/>
</dbReference>
<dbReference type="Gene3D" id="3.30.70.20">
    <property type="match status" value="1"/>
</dbReference>
<dbReference type="InterPro" id="IPR001080">
    <property type="entry name" value="3Fe4S_ferredoxin"/>
</dbReference>
<dbReference type="InterPro" id="IPR017896">
    <property type="entry name" value="4Fe4S_Fe-S-bd"/>
</dbReference>
<dbReference type="InterPro" id="IPR051269">
    <property type="entry name" value="Fe-S_cluster_ET"/>
</dbReference>
<dbReference type="PANTHER" id="PTHR36923">
    <property type="entry name" value="FERREDOXIN"/>
    <property type="match status" value="1"/>
</dbReference>
<dbReference type="PANTHER" id="PTHR36923:SF3">
    <property type="entry name" value="FERREDOXIN"/>
    <property type="match status" value="1"/>
</dbReference>
<dbReference type="Pfam" id="PF13370">
    <property type="entry name" value="Fer4_13"/>
    <property type="match status" value="1"/>
</dbReference>
<dbReference type="PRINTS" id="PR00352">
    <property type="entry name" value="3FE4SFRDOXIN"/>
</dbReference>
<dbReference type="SUPFAM" id="SSF54862">
    <property type="entry name" value="4Fe-4S ferredoxins"/>
    <property type="match status" value="1"/>
</dbReference>
<dbReference type="PROSITE" id="PS51379">
    <property type="entry name" value="4FE4S_FER_2"/>
    <property type="match status" value="2"/>
</dbReference>
<evidence type="ECO:0000250" key="1"/>
<evidence type="ECO:0000255" key="2">
    <source>
        <dbReference type="PROSITE-ProRule" id="PRU00711"/>
    </source>
</evidence>